<protein>
    <recommendedName>
        <fullName>Oncorhyncin-1</fullName>
    </recommendedName>
    <alternativeName>
        <fullName>Oncorhyncin I</fullName>
    </alternativeName>
</protein>
<sequence length="15" mass="1601">SKGKKANKDVELARG</sequence>
<accession>P83287</accession>
<keyword id="KW-0044">Antibiotic</keyword>
<keyword id="KW-0929">Antimicrobial</keyword>
<keyword id="KW-0903">Direct protein sequencing</keyword>
<keyword id="KW-0964">Secreted</keyword>
<comment type="function">
    <text evidence="1">Has antibacterial activity against Gram-positive bacterium P.citreus.</text>
</comment>
<comment type="subcellular location">
    <subcellularLocation>
        <location evidence="1">Secreted</location>
    </subcellularLocation>
</comment>
<comment type="tissue specificity">
    <text evidence="1">Skin.</text>
</comment>
<organism>
    <name type="scientific">Oncorhynchus mykiss</name>
    <name type="common">Rainbow trout</name>
    <name type="synonym">Salmo gairdneri</name>
    <dbReference type="NCBI Taxonomy" id="8022"/>
    <lineage>
        <taxon>Eukaryota</taxon>
        <taxon>Metazoa</taxon>
        <taxon>Chordata</taxon>
        <taxon>Craniata</taxon>
        <taxon>Vertebrata</taxon>
        <taxon>Euteleostomi</taxon>
        <taxon>Actinopterygii</taxon>
        <taxon>Neopterygii</taxon>
        <taxon>Teleostei</taxon>
        <taxon>Protacanthopterygii</taxon>
        <taxon>Salmoniformes</taxon>
        <taxon>Salmonidae</taxon>
        <taxon>Salmoninae</taxon>
        <taxon>Oncorhynchus</taxon>
    </lineage>
</organism>
<proteinExistence type="evidence at protein level"/>
<evidence type="ECO:0000269" key="1">
    <source>
    </source>
</evidence>
<feature type="peptide" id="PRO_0000045107" description="Oncorhyncin-1">
    <location>
        <begin position="1"/>
        <end position="15" status="greater than"/>
    </location>
</feature>
<feature type="unsure residue" description="K or G">
    <location>
        <position position="4"/>
    </location>
</feature>
<feature type="unsure residue" description="D or T">
    <location>
        <position position="9"/>
    </location>
</feature>
<feature type="non-terminal residue">
    <location>
        <position position="15"/>
    </location>
</feature>
<name>ONC1_ONCMY</name>
<dbReference type="Proteomes" id="UP000694395">
    <property type="component" value="Unplaced"/>
</dbReference>
<dbReference type="GO" id="GO:0005576">
    <property type="term" value="C:extracellular region"/>
    <property type="evidence" value="ECO:0007669"/>
    <property type="project" value="UniProtKB-SubCell"/>
</dbReference>
<dbReference type="GO" id="GO:0042742">
    <property type="term" value="P:defense response to bacterium"/>
    <property type="evidence" value="ECO:0007669"/>
    <property type="project" value="UniProtKB-KW"/>
</dbReference>
<reference key="1">
    <citation type="journal article" date="2000" name="Fish Shellfish Immunol.">
        <title>Antibacterial proteins in rainbow trout, Oncorhynchus mykiss.</title>
        <authorList>
            <person name="Smith V.J."/>
            <person name="Fernandes J.M.O."/>
            <person name="Jones S.J."/>
            <person name="Kemp G.D."/>
            <person name="Tatner M.F."/>
        </authorList>
    </citation>
    <scope>PROTEIN SEQUENCE</scope>
    <scope>FUNCTION</scope>
    <scope>SUBCELLULAR LOCATION</scope>
    <scope>TISSUE SPECIFICITY</scope>
    <source>
        <tissue>Skin mucus</tissue>
    </source>
</reference>